<proteinExistence type="evidence at transcript level"/>
<gene>
    <name type="primary">Ca9</name>
    <name type="synonym">Car9</name>
</gene>
<feature type="signal peptide" evidence="4">
    <location>
        <begin position="1"/>
        <end position="31"/>
    </location>
</feature>
<feature type="chain" id="PRO_0000004244" description="Carbonic anhydrase 9">
    <location>
        <begin position="32"/>
        <end position="437"/>
    </location>
</feature>
<feature type="topological domain" description="Extracellular" evidence="4">
    <location>
        <begin position="32"/>
        <end position="390"/>
    </location>
</feature>
<feature type="transmembrane region" description="Helical" evidence="4">
    <location>
        <begin position="391"/>
        <end position="411"/>
    </location>
</feature>
<feature type="topological domain" description="Cytoplasmic" evidence="4">
    <location>
        <begin position="412"/>
        <end position="437"/>
    </location>
</feature>
<feature type="domain" description="Alpha-carbonic anhydrase" evidence="5">
    <location>
        <begin position="118"/>
        <end position="369"/>
    </location>
</feature>
<feature type="region of interest" description="Proteoglycan-like (PG)" evidence="1">
    <location>
        <begin position="32"/>
        <end position="95"/>
    </location>
</feature>
<feature type="region of interest" description="Disordered" evidence="6">
    <location>
        <begin position="34"/>
        <end position="118"/>
    </location>
</feature>
<feature type="region of interest" description="Catalytic" evidence="3">
    <location>
        <begin position="96"/>
        <end position="390"/>
    </location>
</feature>
<feature type="compositionally biased region" description="Acidic residues" evidence="6">
    <location>
        <begin position="50"/>
        <end position="79"/>
    </location>
</feature>
<feature type="active site" description="Proton donor/acceptor" evidence="2">
    <location>
        <position position="179"/>
    </location>
</feature>
<feature type="binding site" evidence="3">
    <location>
        <position position="205"/>
    </location>
    <ligand>
        <name>Zn(2+)</name>
        <dbReference type="ChEBI" id="CHEBI:29105"/>
        <note>catalytic</note>
    </ligand>
</feature>
<feature type="binding site" evidence="3">
    <location>
        <position position="207"/>
    </location>
    <ligand>
        <name>Zn(2+)</name>
        <dbReference type="ChEBI" id="CHEBI:29105"/>
        <note>catalytic</note>
    </ligand>
</feature>
<feature type="binding site" evidence="3">
    <location>
        <position position="230"/>
    </location>
    <ligand>
        <name>Zn(2+)</name>
        <dbReference type="ChEBI" id="CHEBI:29105"/>
        <note>catalytic</note>
    </ligand>
</feature>
<feature type="binding site" evidence="2">
    <location>
        <begin position="311"/>
        <end position="312"/>
    </location>
    <ligand>
        <name>substrate</name>
    </ligand>
</feature>
<feature type="modified residue" description="Phosphotyrosine" evidence="3">
    <location>
        <position position="427"/>
    </location>
</feature>
<feature type="glycosylation site" description="O-linked (GlcNAc...) threonine" evidence="3">
    <location>
        <position position="98"/>
    </location>
</feature>
<feature type="glycosylation site" description="N-linked (GlcNAc...) asparagine" evidence="3">
    <location>
        <position position="325"/>
    </location>
</feature>
<feature type="disulfide bond" evidence="3">
    <location>
        <begin position="135"/>
        <end position="315"/>
    </location>
</feature>
<feature type="disulfide bond" description="Interchain" evidence="3">
    <location>
        <position position="153"/>
    </location>
</feature>
<feature type="splice variant" id="VSP_007409" description="In isoform 2." evidence="7">
    <original>G</original>
    <variation>V</variation>
    <location>
        <position position="282"/>
    </location>
</feature>
<feature type="splice variant" id="VSP_007410" description="In isoform 2." evidence="7">
    <location>
        <begin position="283"/>
        <end position="437"/>
    </location>
</feature>
<reference key="1">
    <citation type="journal article" date="2003" name="J. Immunol. Methods">
        <title>Monoclonal antibodies generated in carbonic anhydrase IX-deficient mice recognize different domains of tumour-associated hypoxia-induced carbonic anhydrase IX.</title>
        <authorList>
            <person name="Zat'ovicova M."/>
            <person name="Tarabkova K."/>
            <person name="Svastova E."/>
            <person name="Gibadulinova A."/>
            <person name="Mucha V."/>
            <person name="Jakubickova L."/>
            <person name="Biesova Z."/>
            <person name="Rafajova M."/>
            <person name="Ortova Gut M.O."/>
            <person name="Parkkila S."/>
            <person name="Parkkila A.-K."/>
            <person name="Waheed A."/>
            <person name="Sly W.S."/>
            <person name="Horak I."/>
            <person name="Pastorek J."/>
            <person name="Pastorekova S."/>
        </authorList>
    </citation>
    <scope>NUCLEOTIDE SEQUENCE [GENOMIC DNA] (ISOFORM 1)</scope>
    <source>
        <strain>129/Ola</strain>
    </source>
</reference>
<reference key="2">
    <citation type="submission" date="1999-12" db="EMBL/GenBank/DDBJ databases">
        <authorList>
            <person name="Ortova M."/>
        </authorList>
    </citation>
    <scope>NUCLEOTIDE SEQUENCE [MRNA] (ISOFORM 1)</scope>
</reference>
<reference key="3">
    <citation type="submission" date="2002-06" db="EMBL/GenBank/DDBJ databases">
        <title>Alternative spliced mRNA coding for MN/CA9.</title>
        <authorList>
            <person name="Wang Y.P."/>
            <person name="Yoshikawa K."/>
            <person name="Kozaki K."/>
            <person name="Miyaishi O."/>
            <person name="Nakagawa A."/>
            <person name="Muramatsu H."/>
            <person name="Kawada Y."/>
            <person name="Uchida K."/>
            <person name="Nishikawa N."/>
            <person name="Saga S."/>
        </authorList>
    </citation>
    <scope>NUCLEOTIDE SEQUENCE [MRNA] (ISOFORM 2)</scope>
    <source>
        <strain>ICR</strain>
        <tissue>Small intestine</tissue>
    </source>
</reference>
<sequence>MASLGPSPWAPLSTPAPTAQLLLFLLLQVSAQPQGLSGMQGEPSLGDSSSGEDELGVDVLPSEEDAPEEADPPDGEDPPEVNSEDRMEESLGLEDLSTPEAPEHSQGSHGDEKGGGHSHWSYGGTLLWPQVSPACAGRFQSPVDIRLERTAFCRTLQPLELLGYELQPLPELSLSNNGHTVQLTLPPGLKMALGPGQEYRALQLHLHWGTSDHPGSEHTVNGHRFPAEIHVVHLSTAFSELHEALGRPGGLAVLAAFLQESPEENSAYEQLLSHLEEISEEGSKIEIPGLDVSALLPSDLSRYYRYEGSLTTPPCSQGVIWTVFNETVKLSAKQLHTLSVSLWGPRDSRLQLNFRATQPLNGRTIEASFPAAEDSSPEPVHVNSCFTAGDILALVFGLLFAVTSIAFLLQLRRQHRHRSGTKDRVSYSPAEMTETGA</sequence>
<name>CAH9_MOUSE</name>
<organism>
    <name type="scientific">Mus musculus</name>
    <name type="common">Mouse</name>
    <dbReference type="NCBI Taxonomy" id="10090"/>
    <lineage>
        <taxon>Eukaryota</taxon>
        <taxon>Metazoa</taxon>
        <taxon>Chordata</taxon>
        <taxon>Craniata</taxon>
        <taxon>Vertebrata</taxon>
        <taxon>Euteleostomi</taxon>
        <taxon>Mammalia</taxon>
        <taxon>Eutheria</taxon>
        <taxon>Euarchontoglires</taxon>
        <taxon>Glires</taxon>
        <taxon>Rodentia</taxon>
        <taxon>Myomorpha</taxon>
        <taxon>Muroidea</taxon>
        <taxon>Muridae</taxon>
        <taxon>Murinae</taxon>
        <taxon>Mus</taxon>
        <taxon>Mus</taxon>
    </lineage>
</organism>
<dbReference type="EC" id="4.2.1.1" evidence="3"/>
<dbReference type="EMBL" id="AY049077">
    <property type="protein sequence ID" value="AAL14193.1"/>
    <property type="molecule type" value="Genomic_DNA"/>
</dbReference>
<dbReference type="EMBL" id="AJ245857">
    <property type="protein sequence ID" value="CAC80975.1"/>
    <property type="molecule type" value="mRNA"/>
</dbReference>
<dbReference type="EMBL" id="AB086322">
    <property type="protein sequence ID" value="BAC00816.1"/>
    <property type="molecule type" value="mRNA"/>
</dbReference>
<dbReference type="CCDS" id="CCDS18099.1">
    <molecule id="Q8VHB5-1"/>
</dbReference>
<dbReference type="RefSeq" id="NP_647466.2">
    <molecule id="Q8VHB5-1"/>
    <property type="nucleotide sequence ID" value="NM_139305.2"/>
</dbReference>
<dbReference type="SMR" id="Q8VHB5"/>
<dbReference type="FunCoup" id="Q8VHB5">
    <property type="interactions" value="127"/>
</dbReference>
<dbReference type="STRING" id="10090.ENSMUSP00000030183"/>
<dbReference type="GlyCosmos" id="Q8VHB5">
    <property type="glycosylation" value="2 sites, No reported glycans"/>
</dbReference>
<dbReference type="GlyGen" id="Q8VHB5">
    <property type="glycosylation" value="3 sites"/>
</dbReference>
<dbReference type="PhosphoSitePlus" id="Q8VHB5"/>
<dbReference type="PaxDb" id="10090-ENSMUSP00000030183"/>
<dbReference type="ProteomicsDB" id="265424">
    <molecule id="Q8VHB5-1"/>
</dbReference>
<dbReference type="ProteomicsDB" id="265425">
    <molecule id="Q8VHB5-2"/>
</dbReference>
<dbReference type="Antibodypedia" id="3915">
    <property type="antibodies" value="1407 antibodies from 48 providers"/>
</dbReference>
<dbReference type="DNASU" id="230099"/>
<dbReference type="Ensembl" id="ENSMUST00000030183.10">
    <molecule id="Q8VHB5-1"/>
    <property type="protein sequence ID" value="ENSMUSP00000030183.4"/>
    <property type="gene ID" value="ENSMUSG00000028463.15"/>
</dbReference>
<dbReference type="GeneID" id="230099"/>
<dbReference type="KEGG" id="mmu:230099"/>
<dbReference type="UCSC" id="uc008sqa.1">
    <molecule id="Q8VHB5-1"/>
    <property type="organism name" value="mouse"/>
</dbReference>
<dbReference type="AGR" id="MGI:2447188"/>
<dbReference type="CTD" id="230099"/>
<dbReference type="MGI" id="MGI:2447188">
    <property type="gene designation" value="Car9"/>
</dbReference>
<dbReference type="VEuPathDB" id="HostDB:ENSMUSG00000028463"/>
<dbReference type="eggNOG" id="KOG0382">
    <property type="taxonomic scope" value="Eukaryota"/>
</dbReference>
<dbReference type="GeneTree" id="ENSGT00940000161646"/>
<dbReference type="HOGENOM" id="CLU_039326_1_1_1"/>
<dbReference type="InParanoid" id="Q8VHB5"/>
<dbReference type="OMA" id="MNFRATQ"/>
<dbReference type="OrthoDB" id="429145at2759"/>
<dbReference type="PhylomeDB" id="Q8VHB5"/>
<dbReference type="TreeFam" id="TF316425"/>
<dbReference type="Reactome" id="R-MMU-1475029">
    <property type="pathway name" value="Reversible hydration of carbon dioxide"/>
</dbReference>
<dbReference type="BioGRID-ORCS" id="230099">
    <property type="hits" value="3 hits in 79 CRISPR screens"/>
</dbReference>
<dbReference type="PRO" id="PR:Q8VHB5"/>
<dbReference type="Proteomes" id="UP000000589">
    <property type="component" value="Chromosome 4"/>
</dbReference>
<dbReference type="RNAct" id="Q8VHB5">
    <property type="molecule type" value="protein"/>
</dbReference>
<dbReference type="Bgee" id="ENSMUSG00000028463">
    <property type="expression patterns" value="Expressed in epithelium of stomach and 94 other cell types or tissues"/>
</dbReference>
<dbReference type="ExpressionAtlas" id="Q8VHB5">
    <property type="expression patterns" value="baseline and differential"/>
</dbReference>
<dbReference type="GO" id="GO:0016323">
    <property type="term" value="C:basolateral plasma membrane"/>
    <property type="evidence" value="ECO:0007669"/>
    <property type="project" value="Ensembl"/>
</dbReference>
<dbReference type="GO" id="GO:0031528">
    <property type="term" value="C:microvillus membrane"/>
    <property type="evidence" value="ECO:0007669"/>
    <property type="project" value="UniProtKB-SubCell"/>
</dbReference>
<dbReference type="GO" id="GO:0005730">
    <property type="term" value="C:nucleolus"/>
    <property type="evidence" value="ECO:0007669"/>
    <property type="project" value="UniProtKB-SubCell"/>
</dbReference>
<dbReference type="GO" id="GO:0005886">
    <property type="term" value="C:plasma membrane"/>
    <property type="evidence" value="ECO:0000250"/>
    <property type="project" value="UniProtKB"/>
</dbReference>
<dbReference type="GO" id="GO:0004089">
    <property type="term" value="F:carbonate dehydratase activity"/>
    <property type="evidence" value="ECO:0000250"/>
    <property type="project" value="UniProtKB"/>
</dbReference>
<dbReference type="GO" id="GO:0140677">
    <property type="term" value="F:molecular function activator activity"/>
    <property type="evidence" value="ECO:0007669"/>
    <property type="project" value="Ensembl"/>
</dbReference>
<dbReference type="GO" id="GO:0008270">
    <property type="term" value="F:zinc ion binding"/>
    <property type="evidence" value="ECO:0000250"/>
    <property type="project" value="UniProtKB"/>
</dbReference>
<dbReference type="GO" id="GO:0002009">
    <property type="term" value="P:morphogenesis of an epithelium"/>
    <property type="evidence" value="ECO:0000315"/>
    <property type="project" value="MGI"/>
</dbReference>
<dbReference type="GO" id="GO:0001666">
    <property type="term" value="P:response to hypoxia"/>
    <property type="evidence" value="ECO:0007669"/>
    <property type="project" value="Ensembl"/>
</dbReference>
<dbReference type="GO" id="GO:0033574">
    <property type="term" value="P:response to testosterone"/>
    <property type="evidence" value="ECO:0007669"/>
    <property type="project" value="Ensembl"/>
</dbReference>
<dbReference type="GO" id="GO:0009410">
    <property type="term" value="P:response to xenobiotic stimulus"/>
    <property type="evidence" value="ECO:0007669"/>
    <property type="project" value="Ensembl"/>
</dbReference>
<dbReference type="GO" id="GO:0046903">
    <property type="term" value="P:secretion"/>
    <property type="evidence" value="ECO:0000315"/>
    <property type="project" value="MGI"/>
</dbReference>
<dbReference type="FunFam" id="3.10.200.10:FF:000003">
    <property type="entry name" value="Carbonic anhydrase 12"/>
    <property type="match status" value="1"/>
</dbReference>
<dbReference type="Gene3D" id="3.10.200.10">
    <property type="entry name" value="Alpha carbonic anhydrase"/>
    <property type="match status" value="1"/>
</dbReference>
<dbReference type="InterPro" id="IPR001148">
    <property type="entry name" value="CA_dom"/>
</dbReference>
<dbReference type="InterPro" id="IPR036398">
    <property type="entry name" value="CA_dom_sf"/>
</dbReference>
<dbReference type="InterPro" id="IPR023561">
    <property type="entry name" value="Carbonic_anhydrase_a-class"/>
</dbReference>
<dbReference type="InterPro" id="IPR018338">
    <property type="entry name" value="Carbonic_anhydrase_a-class_CS"/>
</dbReference>
<dbReference type="PANTHER" id="PTHR18952">
    <property type="entry name" value="CARBONIC ANHYDRASE"/>
    <property type="match status" value="1"/>
</dbReference>
<dbReference type="PANTHER" id="PTHR18952:SF18">
    <property type="entry name" value="CARBONIC ANHYDRASE 9"/>
    <property type="match status" value="1"/>
</dbReference>
<dbReference type="Pfam" id="PF00194">
    <property type="entry name" value="Carb_anhydrase"/>
    <property type="match status" value="1"/>
</dbReference>
<dbReference type="SMART" id="SM01057">
    <property type="entry name" value="Carb_anhydrase"/>
    <property type="match status" value="1"/>
</dbReference>
<dbReference type="SUPFAM" id="SSF51069">
    <property type="entry name" value="Carbonic anhydrase"/>
    <property type="match status" value="1"/>
</dbReference>
<dbReference type="PROSITE" id="PS00162">
    <property type="entry name" value="ALPHA_CA_1"/>
    <property type="match status" value="1"/>
</dbReference>
<dbReference type="PROSITE" id="PS51144">
    <property type="entry name" value="ALPHA_CA_2"/>
    <property type="match status" value="1"/>
</dbReference>
<protein>
    <recommendedName>
        <fullName>Carbonic anhydrase 9</fullName>
        <ecNumber evidence="3">4.2.1.1</ecNumber>
    </recommendedName>
    <alternativeName>
        <fullName>Carbonate dehydratase IX</fullName>
    </alternativeName>
    <alternativeName>
        <fullName>Carbonic anhydrase IX</fullName>
        <shortName>CA-IX</shortName>
        <shortName>CAIX</shortName>
    </alternativeName>
    <alternativeName>
        <fullName>Membrane antigen MN homolog</fullName>
    </alternativeName>
</protein>
<evidence type="ECO:0000250" key="1"/>
<evidence type="ECO:0000250" key="2">
    <source>
        <dbReference type="UniProtKB" id="P00918"/>
    </source>
</evidence>
<evidence type="ECO:0000250" key="3">
    <source>
        <dbReference type="UniProtKB" id="Q16790"/>
    </source>
</evidence>
<evidence type="ECO:0000255" key="4"/>
<evidence type="ECO:0000255" key="5">
    <source>
        <dbReference type="PROSITE-ProRule" id="PRU01134"/>
    </source>
</evidence>
<evidence type="ECO:0000256" key="6">
    <source>
        <dbReference type="SAM" id="MobiDB-lite"/>
    </source>
</evidence>
<evidence type="ECO:0000303" key="7">
    <source ref="3"/>
</evidence>
<evidence type="ECO:0000305" key="8"/>
<comment type="function">
    <text evidence="3">Catalyzes the interconversion between carbon dioxide and water and the dissociated ions of carbonic acid (i.e. bicarbonate and hydrogen ions).</text>
</comment>
<comment type="catalytic activity">
    <reaction evidence="3">
        <text>hydrogencarbonate + H(+) = CO2 + H2O</text>
        <dbReference type="Rhea" id="RHEA:10748"/>
        <dbReference type="ChEBI" id="CHEBI:15377"/>
        <dbReference type="ChEBI" id="CHEBI:15378"/>
        <dbReference type="ChEBI" id="CHEBI:16526"/>
        <dbReference type="ChEBI" id="CHEBI:17544"/>
        <dbReference type="EC" id="4.2.1.1"/>
    </reaction>
    <physiologicalReaction direction="left-to-right" evidence="3">
        <dbReference type="Rhea" id="RHEA:10749"/>
    </physiologicalReaction>
    <physiologicalReaction direction="right-to-left" evidence="3">
        <dbReference type="Rhea" id="RHEA:10750"/>
    </physiologicalReaction>
</comment>
<comment type="cofactor">
    <cofactor evidence="3">
        <name>Zn(2+)</name>
        <dbReference type="ChEBI" id="CHEBI:29105"/>
    </cofactor>
</comment>
<comment type="activity regulation">
    <text evidence="3">Inhibited by acetazolamide.</text>
</comment>
<comment type="subunit">
    <text evidence="3">Forms oligomers linked by disulfide bonds.</text>
</comment>
<comment type="subcellular location">
    <subcellularLocation>
        <location evidence="3">Nucleus</location>
    </subcellularLocation>
    <subcellularLocation>
        <location evidence="3">Nucleus</location>
        <location evidence="3">Nucleolus</location>
    </subcellularLocation>
    <subcellularLocation>
        <location evidence="3">Cell membrane</location>
        <topology evidence="3">Single-pass type I membrane protein</topology>
    </subcellularLocation>
    <subcellularLocation>
        <location evidence="3">Cell projection</location>
        <location evidence="3">Microvillus membrane</location>
        <topology evidence="3">Single-pass type I membrane protein</topology>
    </subcellularLocation>
    <text evidence="3">Found on the surface microvilli and in the nucleus, particularly in nucleolus.</text>
</comment>
<comment type="alternative products">
    <event type="alternative splicing"/>
    <isoform>
        <id>Q8VHB5-1</id>
        <name>1</name>
        <sequence type="displayed"/>
    </isoform>
    <isoform>
        <id>Q8VHB5-2</id>
        <name>2</name>
        <sequence type="described" ref="VSP_007409 VSP_007410"/>
    </isoform>
</comment>
<comment type="PTM">
    <text evidence="3">Asn-325 bears high-mannose type glycan structures.</text>
</comment>
<comment type="similarity">
    <text evidence="8">Belongs to the alpha-carbonic anhydrase family.</text>
</comment>
<accession>Q8VHB5</accession>
<accession>Q8K1G1</accession>
<accession>Q8VDE4</accession>
<keyword id="KW-0025">Alternative splicing</keyword>
<keyword id="KW-1003">Cell membrane</keyword>
<keyword id="KW-0966">Cell projection</keyword>
<keyword id="KW-1015">Disulfide bond</keyword>
<keyword id="KW-0325">Glycoprotein</keyword>
<keyword id="KW-0456">Lyase</keyword>
<keyword id="KW-0472">Membrane</keyword>
<keyword id="KW-0479">Metal-binding</keyword>
<keyword id="KW-0539">Nucleus</keyword>
<keyword id="KW-0597">Phosphoprotein</keyword>
<keyword id="KW-1185">Reference proteome</keyword>
<keyword id="KW-0732">Signal</keyword>
<keyword id="KW-0812">Transmembrane</keyword>
<keyword id="KW-1133">Transmembrane helix</keyword>
<keyword id="KW-0862">Zinc</keyword>